<name>PYRG_RICPU</name>
<reference key="1">
    <citation type="journal article" date="2009" name="PLoS ONE">
        <title>Genome sequence of the endosymbiont Rickettsia peacockii and comparison with virulent Rickettsia rickettsii: identification of virulence factors.</title>
        <authorList>
            <person name="Felsheim R.F."/>
            <person name="Kurtti T.J."/>
            <person name="Munderloh U.G."/>
        </authorList>
    </citation>
    <scope>NUCLEOTIDE SEQUENCE [LARGE SCALE GENOMIC DNA]</scope>
    <source>
        <strain>Rustic</strain>
    </source>
</reference>
<accession>C4K2E0</accession>
<organism>
    <name type="scientific">Rickettsia peacockii (strain Rustic)</name>
    <dbReference type="NCBI Taxonomy" id="562019"/>
    <lineage>
        <taxon>Bacteria</taxon>
        <taxon>Pseudomonadati</taxon>
        <taxon>Pseudomonadota</taxon>
        <taxon>Alphaproteobacteria</taxon>
        <taxon>Rickettsiales</taxon>
        <taxon>Rickettsiaceae</taxon>
        <taxon>Rickettsieae</taxon>
        <taxon>Rickettsia</taxon>
        <taxon>spotted fever group</taxon>
    </lineage>
</organism>
<proteinExistence type="inferred from homology"/>
<protein>
    <recommendedName>
        <fullName evidence="1">CTP synthase</fullName>
        <ecNumber evidence="1">6.3.4.2</ecNumber>
    </recommendedName>
    <alternativeName>
        <fullName evidence="1">Cytidine 5'-triphosphate synthase</fullName>
    </alternativeName>
    <alternativeName>
        <fullName evidence="1">Cytidine triphosphate synthetase</fullName>
        <shortName evidence="1">CTP synthetase</shortName>
        <shortName evidence="1">CTPS</shortName>
    </alternativeName>
    <alternativeName>
        <fullName evidence="1">UTP--ammonia ligase</fullName>
    </alternativeName>
</protein>
<dbReference type="EC" id="6.3.4.2" evidence="1"/>
<dbReference type="EMBL" id="CP001227">
    <property type="protein sequence ID" value="ACR47737.1"/>
    <property type="molecule type" value="Genomic_DNA"/>
</dbReference>
<dbReference type="RefSeq" id="WP_012736926.1">
    <property type="nucleotide sequence ID" value="NC_012730.1"/>
</dbReference>
<dbReference type="SMR" id="C4K2E0"/>
<dbReference type="KEGG" id="rpk:RPR_05935"/>
<dbReference type="HOGENOM" id="CLU_011675_5_0_5"/>
<dbReference type="UniPathway" id="UPA00159">
    <property type="reaction ID" value="UER00277"/>
</dbReference>
<dbReference type="Proteomes" id="UP000005015">
    <property type="component" value="Chromosome"/>
</dbReference>
<dbReference type="GO" id="GO:0097268">
    <property type="term" value="C:cytoophidium"/>
    <property type="evidence" value="ECO:0007669"/>
    <property type="project" value="TreeGrafter"/>
</dbReference>
<dbReference type="GO" id="GO:0005737">
    <property type="term" value="C:cytoplasm"/>
    <property type="evidence" value="ECO:0007669"/>
    <property type="project" value="TreeGrafter"/>
</dbReference>
<dbReference type="GO" id="GO:0005524">
    <property type="term" value="F:ATP binding"/>
    <property type="evidence" value="ECO:0007669"/>
    <property type="project" value="UniProtKB-KW"/>
</dbReference>
<dbReference type="GO" id="GO:0003883">
    <property type="term" value="F:CTP synthase activity"/>
    <property type="evidence" value="ECO:0007669"/>
    <property type="project" value="UniProtKB-UniRule"/>
</dbReference>
<dbReference type="GO" id="GO:0004359">
    <property type="term" value="F:glutaminase activity"/>
    <property type="evidence" value="ECO:0007669"/>
    <property type="project" value="RHEA"/>
</dbReference>
<dbReference type="GO" id="GO:0042802">
    <property type="term" value="F:identical protein binding"/>
    <property type="evidence" value="ECO:0007669"/>
    <property type="project" value="TreeGrafter"/>
</dbReference>
<dbReference type="GO" id="GO:0046872">
    <property type="term" value="F:metal ion binding"/>
    <property type="evidence" value="ECO:0007669"/>
    <property type="project" value="UniProtKB-KW"/>
</dbReference>
<dbReference type="GO" id="GO:0044210">
    <property type="term" value="P:'de novo' CTP biosynthetic process"/>
    <property type="evidence" value="ECO:0007669"/>
    <property type="project" value="UniProtKB-UniRule"/>
</dbReference>
<dbReference type="GO" id="GO:0019856">
    <property type="term" value="P:pyrimidine nucleobase biosynthetic process"/>
    <property type="evidence" value="ECO:0007669"/>
    <property type="project" value="TreeGrafter"/>
</dbReference>
<dbReference type="CDD" id="cd03113">
    <property type="entry name" value="CTPS_N"/>
    <property type="match status" value="1"/>
</dbReference>
<dbReference type="CDD" id="cd01746">
    <property type="entry name" value="GATase1_CTP_Synthase"/>
    <property type="match status" value="1"/>
</dbReference>
<dbReference type="FunFam" id="3.40.50.300:FF:000009">
    <property type="entry name" value="CTP synthase"/>
    <property type="match status" value="1"/>
</dbReference>
<dbReference type="FunFam" id="3.40.50.880:FF:000002">
    <property type="entry name" value="CTP synthase"/>
    <property type="match status" value="1"/>
</dbReference>
<dbReference type="Gene3D" id="3.40.50.880">
    <property type="match status" value="1"/>
</dbReference>
<dbReference type="Gene3D" id="3.40.50.300">
    <property type="entry name" value="P-loop containing nucleotide triphosphate hydrolases"/>
    <property type="match status" value="1"/>
</dbReference>
<dbReference type="HAMAP" id="MF_01227">
    <property type="entry name" value="PyrG"/>
    <property type="match status" value="1"/>
</dbReference>
<dbReference type="InterPro" id="IPR029062">
    <property type="entry name" value="Class_I_gatase-like"/>
</dbReference>
<dbReference type="InterPro" id="IPR004468">
    <property type="entry name" value="CTP_synthase"/>
</dbReference>
<dbReference type="InterPro" id="IPR017456">
    <property type="entry name" value="CTP_synthase_N"/>
</dbReference>
<dbReference type="InterPro" id="IPR017926">
    <property type="entry name" value="GATASE"/>
</dbReference>
<dbReference type="InterPro" id="IPR033828">
    <property type="entry name" value="GATase1_CTP_Synthase"/>
</dbReference>
<dbReference type="InterPro" id="IPR027417">
    <property type="entry name" value="P-loop_NTPase"/>
</dbReference>
<dbReference type="NCBIfam" id="NF003792">
    <property type="entry name" value="PRK05380.1"/>
    <property type="match status" value="1"/>
</dbReference>
<dbReference type="NCBIfam" id="TIGR00337">
    <property type="entry name" value="PyrG"/>
    <property type="match status" value="1"/>
</dbReference>
<dbReference type="PANTHER" id="PTHR11550">
    <property type="entry name" value="CTP SYNTHASE"/>
    <property type="match status" value="1"/>
</dbReference>
<dbReference type="PANTHER" id="PTHR11550:SF0">
    <property type="entry name" value="CTP SYNTHASE-RELATED"/>
    <property type="match status" value="1"/>
</dbReference>
<dbReference type="Pfam" id="PF06418">
    <property type="entry name" value="CTP_synth_N"/>
    <property type="match status" value="1"/>
</dbReference>
<dbReference type="Pfam" id="PF00117">
    <property type="entry name" value="GATase"/>
    <property type="match status" value="1"/>
</dbReference>
<dbReference type="SUPFAM" id="SSF52317">
    <property type="entry name" value="Class I glutamine amidotransferase-like"/>
    <property type="match status" value="1"/>
</dbReference>
<dbReference type="SUPFAM" id="SSF52540">
    <property type="entry name" value="P-loop containing nucleoside triphosphate hydrolases"/>
    <property type="match status" value="1"/>
</dbReference>
<dbReference type="PROSITE" id="PS51273">
    <property type="entry name" value="GATASE_TYPE_1"/>
    <property type="match status" value="1"/>
</dbReference>
<comment type="function">
    <text evidence="1">Catalyzes the ATP-dependent amination of UTP to CTP with either L-glutamine or ammonia as the source of nitrogen. Regulates intracellular CTP levels through interactions with the four ribonucleotide triphosphates.</text>
</comment>
<comment type="catalytic activity">
    <reaction evidence="1">
        <text>UTP + L-glutamine + ATP + H2O = CTP + L-glutamate + ADP + phosphate + 2 H(+)</text>
        <dbReference type="Rhea" id="RHEA:26426"/>
        <dbReference type="ChEBI" id="CHEBI:15377"/>
        <dbReference type="ChEBI" id="CHEBI:15378"/>
        <dbReference type="ChEBI" id="CHEBI:29985"/>
        <dbReference type="ChEBI" id="CHEBI:30616"/>
        <dbReference type="ChEBI" id="CHEBI:37563"/>
        <dbReference type="ChEBI" id="CHEBI:43474"/>
        <dbReference type="ChEBI" id="CHEBI:46398"/>
        <dbReference type="ChEBI" id="CHEBI:58359"/>
        <dbReference type="ChEBI" id="CHEBI:456216"/>
        <dbReference type="EC" id="6.3.4.2"/>
    </reaction>
</comment>
<comment type="catalytic activity">
    <reaction evidence="1">
        <text>L-glutamine + H2O = L-glutamate + NH4(+)</text>
        <dbReference type="Rhea" id="RHEA:15889"/>
        <dbReference type="ChEBI" id="CHEBI:15377"/>
        <dbReference type="ChEBI" id="CHEBI:28938"/>
        <dbReference type="ChEBI" id="CHEBI:29985"/>
        <dbReference type="ChEBI" id="CHEBI:58359"/>
    </reaction>
</comment>
<comment type="catalytic activity">
    <reaction evidence="1">
        <text>UTP + NH4(+) + ATP = CTP + ADP + phosphate + 2 H(+)</text>
        <dbReference type="Rhea" id="RHEA:16597"/>
        <dbReference type="ChEBI" id="CHEBI:15378"/>
        <dbReference type="ChEBI" id="CHEBI:28938"/>
        <dbReference type="ChEBI" id="CHEBI:30616"/>
        <dbReference type="ChEBI" id="CHEBI:37563"/>
        <dbReference type="ChEBI" id="CHEBI:43474"/>
        <dbReference type="ChEBI" id="CHEBI:46398"/>
        <dbReference type="ChEBI" id="CHEBI:456216"/>
    </reaction>
</comment>
<comment type="activity regulation">
    <text evidence="1">Allosterically activated by GTP, when glutamine is the substrate; GTP has no effect on the reaction when ammonia is the substrate. The allosteric effector GTP functions by stabilizing the protein conformation that binds the tetrahedral intermediate(s) formed during glutamine hydrolysis. Inhibited by the product CTP, via allosteric rather than competitive inhibition.</text>
</comment>
<comment type="pathway">
    <text evidence="1">Pyrimidine metabolism; CTP biosynthesis via de novo pathway; CTP from UDP: step 2/2.</text>
</comment>
<comment type="subunit">
    <text evidence="1">Homotetramer.</text>
</comment>
<comment type="miscellaneous">
    <text evidence="1">CTPSs have evolved a hybrid strategy for distinguishing between UTP and CTP. The overlapping regions of the product feedback inhibitory and substrate sites recognize a common feature in both compounds, the triphosphate moiety. To differentiate isosteric substrate and product pyrimidine rings, an additional pocket far from the expected kinase/ligase catalytic site, specifically recognizes the cytosine and ribose portions of the product inhibitor.</text>
</comment>
<comment type="similarity">
    <text evidence="1">Belongs to the CTP synthase family.</text>
</comment>
<gene>
    <name evidence="1" type="primary">pyrG</name>
    <name type="ordered locus">RPR_05935</name>
</gene>
<keyword id="KW-0067">ATP-binding</keyword>
<keyword id="KW-0315">Glutamine amidotransferase</keyword>
<keyword id="KW-0436">Ligase</keyword>
<keyword id="KW-0460">Magnesium</keyword>
<keyword id="KW-0479">Metal-binding</keyword>
<keyword id="KW-0547">Nucleotide-binding</keyword>
<keyword id="KW-0665">Pyrimidine biosynthesis</keyword>
<feature type="chain" id="PRO_1000214016" description="CTP synthase">
    <location>
        <begin position="1"/>
        <end position="537"/>
    </location>
</feature>
<feature type="domain" description="Glutamine amidotransferase type-1" evidence="1">
    <location>
        <begin position="290"/>
        <end position="536"/>
    </location>
</feature>
<feature type="region of interest" description="Amidoligase domain" evidence="1">
    <location>
        <begin position="1"/>
        <end position="265"/>
    </location>
</feature>
<feature type="active site" description="Nucleophile; for glutamine hydrolysis" evidence="1">
    <location>
        <position position="379"/>
    </location>
</feature>
<feature type="active site" evidence="1">
    <location>
        <position position="509"/>
    </location>
</feature>
<feature type="active site" evidence="1">
    <location>
        <position position="511"/>
    </location>
</feature>
<feature type="binding site" evidence="1">
    <location>
        <position position="13"/>
    </location>
    <ligand>
        <name>CTP</name>
        <dbReference type="ChEBI" id="CHEBI:37563"/>
        <note>allosteric inhibitor</note>
    </ligand>
</feature>
<feature type="binding site" evidence="1">
    <location>
        <position position="13"/>
    </location>
    <ligand>
        <name>UTP</name>
        <dbReference type="ChEBI" id="CHEBI:46398"/>
    </ligand>
</feature>
<feature type="binding site" evidence="1">
    <location>
        <begin position="14"/>
        <end position="19"/>
    </location>
    <ligand>
        <name>ATP</name>
        <dbReference type="ChEBI" id="CHEBI:30616"/>
    </ligand>
</feature>
<feature type="binding site" evidence="1">
    <location>
        <position position="71"/>
    </location>
    <ligand>
        <name>ATP</name>
        <dbReference type="ChEBI" id="CHEBI:30616"/>
    </ligand>
</feature>
<feature type="binding site" evidence="1">
    <location>
        <position position="71"/>
    </location>
    <ligand>
        <name>Mg(2+)</name>
        <dbReference type="ChEBI" id="CHEBI:18420"/>
    </ligand>
</feature>
<feature type="binding site" evidence="1">
    <location>
        <position position="139"/>
    </location>
    <ligand>
        <name>Mg(2+)</name>
        <dbReference type="ChEBI" id="CHEBI:18420"/>
    </ligand>
</feature>
<feature type="binding site" evidence="1">
    <location>
        <begin position="146"/>
        <end position="148"/>
    </location>
    <ligand>
        <name>CTP</name>
        <dbReference type="ChEBI" id="CHEBI:37563"/>
        <note>allosteric inhibitor</note>
    </ligand>
</feature>
<feature type="binding site" evidence="1">
    <location>
        <position position="222"/>
    </location>
    <ligand>
        <name>CTP</name>
        <dbReference type="ChEBI" id="CHEBI:37563"/>
        <note>allosteric inhibitor</note>
    </ligand>
</feature>
<feature type="binding site" evidence="1">
    <location>
        <position position="222"/>
    </location>
    <ligand>
        <name>UTP</name>
        <dbReference type="ChEBI" id="CHEBI:46398"/>
    </ligand>
</feature>
<feature type="binding site" evidence="1">
    <location>
        <position position="352"/>
    </location>
    <ligand>
        <name>L-glutamine</name>
        <dbReference type="ChEBI" id="CHEBI:58359"/>
    </ligand>
</feature>
<feature type="binding site" evidence="1">
    <location>
        <begin position="380"/>
        <end position="383"/>
    </location>
    <ligand>
        <name>L-glutamine</name>
        <dbReference type="ChEBI" id="CHEBI:58359"/>
    </ligand>
</feature>
<feature type="binding site" evidence="1">
    <location>
        <position position="403"/>
    </location>
    <ligand>
        <name>L-glutamine</name>
        <dbReference type="ChEBI" id="CHEBI:58359"/>
    </ligand>
</feature>
<feature type="binding site" evidence="1">
    <location>
        <position position="464"/>
    </location>
    <ligand>
        <name>L-glutamine</name>
        <dbReference type="ChEBI" id="CHEBI:58359"/>
    </ligand>
</feature>
<sequence length="537" mass="60400">MVHFIFVTGGVVSSLGKGLTAASLAMLLQAKGFRVSVRKLDPYLNIDPGTMNPHEHGEVYVTDDGAETDLDLGHYERFTGVSACKFDSITTGAIYSKLLKDERLGNYAGVTVQVIPHVTNIIKDFILSNTKGVDFIICEIGGTVGDIEGLPFFEAIRQIGNQLKSENCLFIHLTLLPYVKTARELKIKPTQHSVKALRAIGISPNILVCRAERNISKGEIDKISLLCNIESEYVVPAIDQKNIYLVPIAYHNSGLDNKVLKFFNINIMPSKLDKWHDIINRLKDSNSKVRIAIIAKYHKLKDAYKSVIEALDHAGIYYKYKIDLVWINAENLTEENINKKLLDIDGILVPGGFGERATKGKIIAIKYARTNNIPFFGICFGMQLATIEIAQNLIGIKDAVTEEFKVDGTKIIEKINKNCEDSKITIENVKKTMRLGSYPCSLVAGTIAANAYKSLEINERHRHRYKFNNEFQNIFEKHGIVFSGFSKDEEIVEIIELPLLRWFVGVQFHPEFKSKPFEAHPLFIQFIKAAIEYNKCN</sequence>
<evidence type="ECO:0000255" key="1">
    <source>
        <dbReference type="HAMAP-Rule" id="MF_01227"/>
    </source>
</evidence>